<protein>
    <recommendedName>
        <fullName evidence="1">Ribosomal RNA small subunit methyltransferase H</fullName>
        <ecNumber evidence="1">2.1.1.199</ecNumber>
    </recommendedName>
    <alternativeName>
        <fullName evidence="1">16S rRNA m(4)C1402 methyltransferase</fullName>
    </alternativeName>
    <alternativeName>
        <fullName evidence="1">rRNA (cytosine-N(4)-)-methyltransferase RsmH</fullName>
    </alternativeName>
</protein>
<keyword id="KW-0963">Cytoplasm</keyword>
<keyword id="KW-0489">Methyltransferase</keyword>
<keyword id="KW-0698">rRNA processing</keyword>
<keyword id="KW-0949">S-adenosyl-L-methionine</keyword>
<keyword id="KW-0808">Transferase</keyword>
<name>RSMH_STRE4</name>
<proteinExistence type="inferred from homology"/>
<gene>
    <name evidence="1" type="primary">rsmH</name>
    <name type="synonym">mraW</name>
    <name type="ordered locus">SEQ_1805</name>
</gene>
<evidence type="ECO:0000255" key="1">
    <source>
        <dbReference type="HAMAP-Rule" id="MF_01007"/>
    </source>
</evidence>
<comment type="function">
    <text evidence="1">Specifically methylates the N4 position of cytidine in position 1402 (C1402) of 16S rRNA.</text>
</comment>
<comment type="catalytic activity">
    <reaction evidence="1">
        <text>cytidine(1402) in 16S rRNA + S-adenosyl-L-methionine = N(4)-methylcytidine(1402) in 16S rRNA + S-adenosyl-L-homocysteine + H(+)</text>
        <dbReference type="Rhea" id="RHEA:42928"/>
        <dbReference type="Rhea" id="RHEA-COMP:10286"/>
        <dbReference type="Rhea" id="RHEA-COMP:10287"/>
        <dbReference type="ChEBI" id="CHEBI:15378"/>
        <dbReference type="ChEBI" id="CHEBI:57856"/>
        <dbReference type="ChEBI" id="CHEBI:59789"/>
        <dbReference type="ChEBI" id="CHEBI:74506"/>
        <dbReference type="ChEBI" id="CHEBI:82748"/>
        <dbReference type="EC" id="2.1.1.199"/>
    </reaction>
</comment>
<comment type="subcellular location">
    <subcellularLocation>
        <location evidence="1">Cytoplasm</location>
    </subcellularLocation>
</comment>
<comment type="similarity">
    <text evidence="1">Belongs to the methyltransferase superfamily. RsmH family.</text>
</comment>
<organism>
    <name type="scientific">Streptococcus equi subsp. equi (strain 4047)</name>
    <dbReference type="NCBI Taxonomy" id="553482"/>
    <lineage>
        <taxon>Bacteria</taxon>
        <taxon>Bacillati</taxon>
        <taxon>Bacillota</taxon>
        <taxon>Bacilli</taxon>
        <taxon>Lactobacillales</taxon>
        <taxon>Streptococcaceae</taxon>
        <taxon>Streptococcus</taxon>
    </lineage>
</organism>
<accession>C0M7A8</accession>
<reference key="1">
    <citation type="journal article" date="2009" name="PLoS Pathog.">
        <title>Genomic evidence for the evolution of Streptococcus equi: host restriction, increased virulence, and genetic exchange with human pathogens.</title>
        <authorList>
            <person name="Holden M.T.G."/>
            <person name="Heather Z."/>
            <person name="Paillot R."/>
            <person name="Steward K.F."/>
            <person name="Webb K."/>
            <person name="Ainslie F."/>
            <person name="Jourdan T."/>
            <person name="Bason N.C."/>
            <person name="Holroyd N.E."/>
            <person name="Mungall K."/>
            <person name="Quail M.A."/>
            <person name="Sanders M."/>
            <person name="Simmonds M."/>
            <person name="Willey D."/>
            <person name="Brooks K."/>
            <person name="Aanensen D.M."/>
            <person name="Spratt B.G."/>
            <person name="Jolley K.A."/>
            <person name="Maiden M.C.J."/>
            <person name="Kehoe M."/>
            <person name="Chanter N."/>
            <person name="Bentley S.D."/>
            <person name="Robinson C."/>
            <person name="Maskell D.J."/>
            <person name="Parkhill J."/>
            <person name="Waller A.S."/>
        </authorList>
    </citation>
    <scope>NUCLEOTIDE SEQUENCE [LARGE SCALE GENOMIC DNA]</scope>
    <source>
        <strain>4047</strain>
    </source>
</reference>
<dbReference type="EC" id="2.1.1.199" evidence="1"/>
<dbReference type="EMBL" id="FM204883">
    <property type="protein sequence ID" value="CAW94939.1"/>
    <property type="molecule type" value="Genomic_DNA"/>
</dbReference>
<dbReference type="RefSeq" id="WP_012680016.1">
    <property type="nucleotide sequence ID" value="NC_012471.1"/>
</dbReference>
<dbReference type="SMR" id="C0M7A8"/>
<dbReference type="KEGG" id="seu:SEQ_1805"/>
<dbReference type="HOGENOM" id="CLU_038422_2_0_9"/>
<dbReference type="OrthoDB" id="9806637at2"/>
<dbReference type="Proteomes" id="UP000001365">
    <property type="component" value="Chromosome"/>
</dbReference>
<dbReference type="GO" id="GO:0005737">
    <property type="term" value="C:cytoplasm"/>
    <property type="evidence" value="ECO:0007669"/>
    <property type="project" value="UniProtKB-SubCell"/>
</dbReference>
<dbReference type="GO" id="GO:0071424">
    <property type="term" value="F:rRNA (cytosine-N4-)-methyltransferase activity"/>
    <property type="evidence" value="ECO:0007669"/>
    <property type="project" value="UniProtKB-UniRule"/>
</dbReference>
<dbReference type="GO" id="GO:0070475">
    <property type="term" value="P:rRNA base methylation"/>
    <property type="evidence" value="ECO:0007669"/>
    <property type="project" value="UniProtKB-UniRule"/>
</dbReference>
<dbReference type="FunFam" id="1.10.150.170:FF:000001">
    <property type="entry name" value="Ribosomal RNA small subunit methyltransferase H"/>
    <property type="match status" value="1"/>
</dbReference>
<dbReference type="Gene3D" id="1.10.150.170">
    <property type="entry name" value="Putative methyltransferase TM0872, insert domain"/>
    <property type="match status" value="1"/>
</dbReference>
<dbReference type="Gene3D" id="3.40.50.150">
    <property type="entry name" value="Vaccinia Virus protein VP39"/>
    <property type="match status" value="1"/>
</dbReference>
<dbReference type="HAMAP" id="MF_01007">
    <property type="entry name" value="16SrRNA_methyltr_H"/>
    <property type="match status" value="1"/>
</dbReference>
<dbReference type="InterPro" id="IPR002903">
    <property type="entry name" value="RsmH"/>
</dbReference>
<dbReference type="InterPro" id="IPR023397">
    <property type="entry name" value="SAM-dep_MeTrfase_MraW_recog"/>
</dbReference>
<dbReference type="InterPro" id="IPR029063">
    <property type="entry name" value="SAM-dependent_MTases_sf"/>
</dbReference>
<dbReference type="NCBIfam" id="TIGR00006">
    <property type="entry name" value="16S rRNA (cytosine(1402)-N(4))-methyltransferase RsmH"/>
    <property type="match status" value="1"/>
</dbReference>
<dbReference type="PANTHER" id="PTHR11265:SF0">
    <property type="entry name" value="12S RRNA N4-METHYLCYTIDINE METHYLTRANSFERASE"/>
    <property type="match status" value="1"/>
</dbReference>
<dbReference type="PANTHER" id="PTHR11265">
    <property type="entry name" value="S-ADENOSYL-METHYLTRANSFERASE MRAW"/>
    <property type="match status" value="1"/>
</dbReference>
<dbReference type="Pfam" id="PF01795">
    <property type="entry name" value="Methyltransf_5"/>
    <property type="match status" value="1"/>
</dbReference>
<dbReference type="PIRSF" id="PIRSF004486">
    <property type="entry name" value="MraW"/>
    <property type="match status" value="1"/>
</dbReference>
<dbReference type="SUPFAM" id="SSF81799">
    <property type="entry name" value="Putative methyltransferase TM0872, insert domain"/>
    <property type="match status" value="1"/>
</dbReference>
<dbReference type="SUPFAM" id="SSF53335">
    <property type="entry name" value="S-adenosyl-L-methionine-dependent methyltransferases"/>
    <property type="match status" value="1"/>
</dbReference>
<feature type="chain" id="PRO_0000387145" description="Ribosomal RNA small subunit methyltransferase H">
    <location>
        <begin position="1"/>
        <end position="316"/>
    </location>
</feature>
<feature type="binding site" evidence="1">
    <location>
        <begin position="35"/>
        <end position="37"/>
    </location>
    <ligand>
        <name>S-adenosyl-L-methionine</name>
        <dbReference type="ChEBI" id="CHEBI:59789"/>
    </ligand>
</feature>
<feature type="binding site" evidence="1">
    <location>
        <position position="55"/>
    </location>
    <ligand>
        <name>S-adenosyl-L-methionine</name>
        <dbReference type="ChEBI" id="CHEBI:59789"/>
    </ligand>
</feature>
<feature type="binding site" evidence="1">
    <location>
        <position position="84"/>
    </location>
    <ligand>
        <name>S-adenosyl-L-methionine</name>
        <dbReference type="ChEBI" id="CHEBI:59789"/>
    </ligand>
</feature>
<feature type="binding site" evidence="1">
    <location>
        <position position="105"/>
    </location>
    <ligand>
        <name>S-adenosyl-L-methionine</name>
        <dbReference type="ChEBI" id="CHEBI:59789"/>
    </ligand>
</feature>
<feature type="binding site" evidence="1">
    <location>
        <position position="112"/>
    </location>
    <ligand>
        <name>S-adenosyl-L-methionine</name>
        <dbReference type="ChEBI" id="CHEBI:59789"/>
    </ligand>
</feature>
<sequence length="316" mass="35581">MTNEFHHVTVLLHEAVDMLDIKPDGIYVDATLGGSGHSAYLLSLLGDKGHLYCFDQDQKAIDHAQEQLKPYIDKGQVTFIKDNFRHLKARLLEHGVTEIDGILYDLGVSSPQLDERERGFSYKQDAPLDMRMDSQAALTAYEVVNTYDFNDLVRIFFKYGEDKFSKQIARKIEQARAIKPISTTTELAALIKSAKPAKELKKKGHPAKQIFQAIRIEVNDELGAADASIQRAIELLALDGRISVITFHSLEDRLTKHLFKEASTADAPKGLPFIPDELKPKLELVSRKPILPSQKELMANNRAHSAKLRVARKVRK</sequence>